<comment type="function">
    <text evidence="1">This is one of the proteins that bind and probably mediate the attachment of the 5S RNA into the large ribosomal subunit, where it forms part of the central protuberance. In the 70S ribosome it contacts protein S13 of the 30S subunit (bridge B1b), connecting the 2 subunits; this bridge is implicated in subunit movement. Contacts the P site tRNA; the 5S rRNA and some of its associated proteins might help stabilize positioning of ribosome-bound tRNAs.</text>
</comment>
<comment type="subunit">
    <text evidence="1">Part of the 50S ribosomal subunit; part of the 5S rRNA/L5/L18/L25 subcomplex. Contacts the 5S rRNA and the P site tRNA. Forms a bridge to the 30S subunit in the 70S ribosome.</text>
</comment>
<comment type="similarity">
    <text evidence="1">Belongs to the universal ribosomal protein uL5 family.</text>
</comment>
<gene>
    <name evidence="1" type="primary">rplE</name>
    <name type="ordered locus">SNSL254_A3697</name>
</gene>
<keyword id="KW-0687">Ribonucleoprotein</keyword>
<keyword id="KW-0689">Ribosomal protein</keyword>
<keyword id="KW-0694">RNA-binding</keyword>
<keyword id="KW-0699">rRNA-binding</keyword>
<keyword id="KW-0820">tRNA-binding</keyword>
<dbReference type="EMBL" id="CP001113">
    <property type="protein sequence ID" value="ACF65425.1"/>
    <property type="molecule type" value="Genomic_DNA"/>
</dbReference>
<dbReference type="RefSeq" id="WP_001096206.1">
    <property type="nucleotide sequence ID" value="NZ_CCMR01000003.1"/>
</dbReference>
<dbReference type="SMR" id="B4SUS8"/>
<dbReference type="GeneID" id="93751944"/>
<dbReference type="KEGG" id="see:SNSL254_A3697"/>
<dbReference type="HOGENOM" id="CLU_061015_2_1_6"/>
<dbReference type="Proteomes" id="UP000008824">
    <property type="component" value="Chromosome"/>
</dbReference>
<dbReference type="GO" id="GO:1990904">
    <property type="term" value="C:ribonucleoprotein complex"/>
    <property type="evidence" value="ECO:0007669"/>
    <property type="project" value="UniProtKB-KW"/>
</dbReference>
<dbReference type="GO" id="GO:0005840">
    <property type="term" value="C:ribosome"/>
    <property type="evidence" value="ECO:0007669"/>
    <property type="project" value="UniProtKB-KW"/>
</dbReference>
<dbReference type="GO" id="GO:0019843">
    <property type="term" value="F:rRNA binding"/>
    <property type="evidence" value="ECO:0007669"/>
    <property type="project" value="UniProtKB-UniRule"/>
</dbReference>
<dbReference type="GO" id="GO:0003735">
    <property type="term" value="F:structural constituent of ribosome"/>
    <property type="evidence" value="ECO:0007669"/>
    <property type="project" value="InterPro"/>
</dbReference>
<dbReference type="GO" id="GO:0000049">
    <property type="term" value="F:tRNA binding"/>
    <property type="evidence" value="ECO:0007669"/>
    <property type="project" value="UniProtKB-UniRule"/>
</dbReference>
<dbReference type="GO" id="GO:0006412">
    <property type="term" value="P:translation"/>
    <property type="evidence" value="ECO:0007669"/>
    <property type="project" value="UniProtKB-UniRule"/>
</dbReference>
<dbReference type="FunFam" id="3.30.1440.10:FF:000001">
    <property type="entry name" value="50S ribosomal protein L5"/>
    <property type="match status" value="1"/>
</dbReference>
<dbReference type="Gene3D" id="3.30.1440.10">
    <property type="match status" value="1"/>
</dbReference>
<dbReference type="HAMAP" id="MF_01333_B">
    <property type="entry name" value="Ribosomal_uL5_B"/>
    <property type="match status" value="1"/>
</dbReference>
<dbReference type="InterPro" id="IPR002132">
    <property type="entry name" value="Ribosomal_uL5"/>
</dbReference>
<dbReference type="InterPro" id="IPR020930">
    <property type="entry name" value="Ribosomal_uL5_bac-type"/>
</dbReference>
<dbReference type="InterPro" id="IPR031309">
    <property type="entry name" value="Ribosomal_uL5_C"/>
</dbReference>
<dbReference type="InterPro" id="IPR020929">
    <property type="entry name" value="Ribosomal_uL5_CS"/>
</dbReference>
<dbReference type="InterPro" id="IPR022803">
    <property type="entry name" value="Ribosomal_uL5_dom_sf"/>
</dbReference>
<dbReference type="InterPro" id="IPR031310">
    <property type="entry name" value="Ribosomal_uL5_N"/>
</dbReference>
<dbReference type="NCBIfam" id="NF000585">
    <property type="entry name" value="PRK00010.1"/>
    <property type="match status" value="1"/>
</dbReference>
<dbReference type="PANTHER" id="PTHR11994">
    <property type="entry name" value="60S RIBOSOMAL PROTEIN L11-RELATED"/>
    <property type="match status" value="1"/>
</dbReference>
<dbReference type="Pfam" id="PF00281">
    <property type="entry name" value="Ribosomal_L5"/>
    <property type="match status" value="1"/>
</dbReference>
<dbReference type="Pfam" id="PF00673">
    <property type="entry name" value="Ribosomal_L5_C"/>
    <property type="match status" value="1"/>
</dbReference>
<dbReference type="PIRSF" id="PIRSF002161">
    <property type="entry name" value="Ribosomal_L5"/>
    <property type="match status" value="1"/>
</dbReference>
<dbReference type="SUPFAM" id="SSF55282">
    <property type="entry name" value="RL5-like"/>
    <property type="match status" value="1"/>
</dbReference>
<dbReference type="PROSITE" id="PS00358">
    <property type="entry name" value="RIBOSOMAL_L5"/>
    <property type="match status" value="1"/>
</dbReference>
<proteinExistence type="inferred from homology"/>
<protein>
    <recommendedName>
        <fullName evidence="1">Large ribosomal subunit protein uL5</fullName>
    </recommendedName>
    <alternativeName>
        <fullName evidence="2">50S ribosomal protein L5</fullName>
    </alternativeName>
</protein>
<feature type="chain" id="PRO_1000142447" description="Large ribosomal subunit protein uL5">
    <location>
        <begin position="1"/>
        <end position="179"/>
    </location>
</feature>
<organism>
    <name type="scientific">Salmonella newport (strain SL254)</name>
    <dbReference type="NCBI Taxonomy" id="423368"/>
    <lineage>
        <taxon>Bacteria</taxon>
        <taxon>Pseudomonadati</taxon>
        <taxon>Pseudomonadota</taxon>
        <taxon>Gammaproteobacteria</taxon>
        <taxon>Enterobacterales</taxon>
        <taxon>Enterobacteriaceae</taxon>
        <taxon>Salmonella</taxon>
    </lineage>
</organism>
<accession>B4SUS8</accession>
<sequence>MAKLHDYYKDEVVNKLMTEFNYNSVMQVPRVEKITLNMGVGEAIADKKLLDNAAADLTAISGQKPLITKARKSVAGFKIRQGYPIGCKVTLRGERMWEFFERLITIAVPRIRDFRGLSAKSFDGRGNYSMGVREQIIFPEIDYDKVDRVRGLDITITTTAKSDEEGRALLAAFDFPFRK</sequence>
<reference key="1">
    <citation type="journal article" date="2011" name="J. Bacteriol.">
        <title>Comparative genomics of 28 Salmonella enterica isolates: evidence for CRISPR-mediated adaptive sublineage evolution.</title>
        <authorList>
            <person name="Fricke W.F."/>
            <person name="Mammel M.K."/>
            <person name="McDermott P.F."/>
            <person name="Tartera C."/>
            <person name="White D.G."/>
            <person name="Leclerc J.E."/>
            <person name="Ravel J."/>
            <person name="Cebula T.A."/>
        </authorList>
    </citation>
    <scope>NUCLEOTIDE SEQUENCE [LARGE SCALE GENOMIC DNA]</scope>
    <source>
        <strain>SL254</strain>
    </source>
</reference>
<evidence type="ECO:0000255" key="1">
    <source>
        <dbReference type="HAMAP-Rule" id="MF_01333"/>
    </source>
</evidence>
<evidence type="ECO:0000305" key="2"/>
<name>RL5_SALNS</name>